<comment type="function">
    <text>Probable ATP-binding RNA helicase.</text>
</comment>
<comment type="catalytic activity">
    <reaction>
        <text>ATP + H2O = ADP + phosphate + H(+)</text>
        <dbReference type="Rhea" id="RHEA:13065"/>
        <dbReference type="ChEBI" id="CHEBI:15377"/>
        <dbReference type="ChEBI" id="CHEBI:15378"/>
        <dbReference type="ChEBI" id="CHEBI:30616"/>
        <dbReference type="ChEBI" id="CHEBI:43474"/>
        <dbReference type="ChEBI" id="CHEBI:456216"/>
        <dbReference type="EC" id="3.6.4.13"/>
    </reaction>
</comment>
<comment type="interaction">
    <interactant intactId="EBI-1051531">
        <id>Q6P158</id>
    </interactant>
    <interactant intactId="EBI-3866279">
        <id>Q9BWT7</id>
        <label>CARD10</label>
    </interactant>
    <organismsDiffer>false</organismsDiffer>
    <experiments>3</experiments>
</comment>
<comment type="interaction">
    <interactant intactId="EBI-1051531">
        <id>Q6P158</id>
    </interactant>
    <interactant intactId="EBI-745934">
        <id>Q14781</id>
        <label>CBX2</label>
    </interactant>
    <organismsDiffer>false</organismsDiffer>
    <experiments>3</experiments>
</comment>
<comment type="interaction">
    <interactant intactId="EBI-1051531">
        <id>Q6P158</id>
    </interactant>
    <interactant intactId="EBI-11974585">
        <id>Q14781-2</id>
        <label>CBX2</label>
    </interactant>
    <organismsDiffer>false</organismsDiffer>
    <experiments>3</experiments>
</comment>
<comment type="interaction">
    <interactant intactId="EBI-1051531">
        <id>Q6P158</id>
    </interactant>
    <interactant intactId="EBI-744115">
        <id>Q9C0F1</id>
        <label>CEP44</label>
    </interactant>
    <organismsDiffer>false</organismsDiffer>
    <experiments>3</experiments>
</comment>
<comment type="interaction">
    <interactant intactId="EBI-1051531">
        <id>Q6P158</id>
    </interactant>
    <interactant intactId="EBI-10171697">
        <id>Q6A162</id>
        <label>KRT40</label>
    </interactant>
    <organismsDiffer>false</organismsDiffer>
    <experiments>3</experiments>
</comment>
<comment type="interaction">
    <interactant intactId="EBI-1051531">
        <id>Q6P158</id>
    </interactant>
    <interactant intactId="EBI-10172150">
        <id>P60370</id>
        <label>KRTAP10-5</label>
    </interactant>
    <organismsDiffer>false</organismsDiffer>
    <experiments>3</experiments>
</comment>
<comment type="interaction">
    <interactant intactId="EBI-1051531">
        <id>Q6P158</id>
    </interactant>
    <interactant intactId="EBI-12012928">
        <id>P60371</id>
        <label>KRTAP10-6</label>
    </interactant>
    <organismsDiffer>false</organismsDiffer>
    <experiments>3</experiments>
</comment>
<comment type="interaction">
    <interactant intactId="EBI-1051531">
        <id>Q6P158</id>
    </interactant>
    <interactant intactId="EBI-10172290">
        <id>P60409</id>
        <label>KRTAP10-7</label>
    </interactant>
    <organismsDiffer>false</organismsDiffer>
    <experiments>6</experiments>
</comment>
<comment type="interaction">
    <interactant intactId="EBI-1051531">
        <id>Q6P158</id>
    </interactant>
    <interactant intactId="EBI-10171774">
        <id>P60410</id>
        <label>KRTAP10-8</label>
    </interactant>
    <organismsDiffer>false</organismsDiffer>
    <experiments>6</experiments>
</comment>
<comment type="interaction">
    <interactant intactId="EBI-1051531">
        <id>Q6P158</id>
    </interactant>
    <interactant intactId="EBI-10172052">
        <id>P60411</id>
        <label>KRTAP10-9</label>
    </interactant>
    <organismsDiffer>false</organismsDiffer>
    <experiments>6</experiments>
</comment>
<comment type="interaction">
    <interactant intactId="EBI-1051531">
        <id>Q6P158</id>
    </interactant>
    <interactant intactId="EBI-11953334">
        <id>P60328</id>
        <label>KRTAP12-3</label>
    </interactant>
    <organismsDiffer>false</organismsDiffer>
    <experiments>3</experiments>
</comment>
<comment type="interaction">
    <interactant intactId="EBI-1051531">
        <id>Q6P158</id>
    </interactant>
    <interactant intactId="EBI-14065470">
        <id>Q9BYR9</id>
        <label>KRTAP2-4</label>
    </interactant>
    <organismsDiffer>false</organismsDiffer>
    <experiments>3</experiments>
</comment>
<comment type="interaction">
    <interactant intactId="EBI-1051531">
        <id>Q6P158</id>
    </interactant>
    <interactant intactId="EBI-10185730">
        <id>Q9BYQ2</id>
        <label>KRTAP9-4</label>
    </interactant>
    <organismsDiffer>false</organismsDiffer>
    <experiments>3</experiments>
</comment>
<comment type="interaction">
    <interactant intactId="EBI-1051531">
        <id>Q6P158</id>
    </interactant>
    <interactant intactId="EBI-747693">
        <id>P41227</id>
        <label>NAA10</label>
    </interactant>
    <organismsDiffer>false</organismsDiffer>
    <experiments>3</experiments>
</comment>
<comment type="interaction">
    <interactant intactId="EBI-1051531">
        <id>Q6P158</id>
    </interactant>
    <interactant intactId="EBI-2876622">
        <id>Q9UPG8</id>
        <label>PLAGL2</label>
    </interactant>
    <organismsDiffer>false</organismsDiffer>
    <experiments>3</experiments>
</comment>
<comment type="interaction">
    <interactant intactId="EBI-1051531">
        <id>Q6P158</id>
    </interactant>
    <interactant intactId="EBI-11994018">
        <id>P0DJD3-2</id>
        <label>RBMY1A1</label>
    </interactant>
    <organismsDiffer>false</organismsDiffer>
    <experiments>3</experiments>
</comment>
<comment type="interaction">
    <interactant intactId="EBI-1051531">
        <id>Q6P158</id>
    </interactant>
    <interactant intactId="EBI-12821217">
        <id>Q2I0M5</id>
        <label>RSPO4</label>
    </interactant>
    <organismsDiffer>false</organismsDiffer>
    <experiments>3</experiments>
</comment>
<comment type="interaction">
    <interactant intactId="EBI-1051531">
        <id>Q6P158</id>
    </interactant>
    <interactant intactId="EBI-751409">
        <id>Q8WTR7</id>
        <label>ZNF473</label>
    </interactant>
    <organismsDiffer>false</organismsDiffer>
    <experiments>3</experiments>
</comment>
<comment type="interaction">
    <interactant intactId="EBI-1051531">
        <id>Q6P158</id>
    </interactant>
    <interactant intactId="EBI-6427977">
        <id>Q96SQ5</id>
        <label>ZNF587</label>
    </interactant>
    <organismsDiffer>false</organismsDiffer>
    <experiments>3</experiments>
</comment>
<comment type="interaction">
    <interactant intactId="EBI-1051531">
        <id>Q6P158</id>
    </interactant>
    <interactant intactId="EBI-11962574">
        <id>Q96EG3</id>
        <label>ZNF837</label>
    </interactant>
    <organismsDiffer>false</organismsDiffer>
    <experiments>3</experiments>
</comment>
<comment type="interaction">
    <interactant intactId="EBI-10252144">
        <id>Q6P158-2</id>
    </interactant>
    <interactant intactId="EBI-10185730">
        <id>Q9BYQ2</id>
        <label>KRTAP9-4</label>
    </interactant>
    <organismsDiffer>false</organismsDiffer>
    <experiments>3</experiments>
</comment>
<comment type="alternative products">
    <event type="alternative splicing"/>
    <isoform>
        <id>Q6P158-1</id>
        <name>1</name>
        <sequence type="displayed"/>
    </isoform>
    <isoform>
        <id>Q6P158-2</id>
        <name>2</name>
        <sequence type="described" ref="VSP_018059 VSP_018060"/>
    </isoform>
    <isoform>
        <id>Q6P158-3</id>
        <name>3</name>
        <sequence type="described" ref="VSP_018056 VSP_018057 VSP_018058"/>
    </isoform>
</comment>
<comment type="similarity">
    <text evidence="11">Belongs to the DEAD box helicase family. DEAH subfamily.</text>
</comment>
<comment type="sequence caution" evidence="11">
    <conflict type="erroneous initiation">
        <sequence resource="EMBL-CDS" id="AAM73547"/>
    </conflict>
</comment>
<comment type="sequence caution" evidence="11">
    <conflict type="erroneous gene model prediction">
        <sequence resource="EMBL-CDS" id="AAY24256"/>
    </conflict>
</comment>
<dbReference type="EC" id="3.6.4.13"/>
<dbReference type="EMBL" id="AK057423">
    <property type="protein sequence ID" value="BAB71479.1"/>
    <property type="molecule type" value="mRNA"/>
</dbReference>
<dbReference type="EMBL" id="AC018693">
    <property type="protein sequence ID" value="AAY24256.1"/>
    <property type="status" value="ALT_SEQ"/>
    <property type="molecule type" value="Genomic_DNA"/>
</dbReference>
<dbReference type="EMBL" id="BC053623">
    <property type="protein sequence ID" value="AAH53623.1"/>
    <property type="molecule type" value="mRNA"/>
</dbReference>
<dbReference type="EMBL" id="BC060778">
    <property type="protein sequence ID" value="AAH60778.2"/>
    <property type="molecule type" value="mRNA"/>
</dbReference>
<dbReference type="EMBL" id="BC065278">
    <property type="protein sequence ID" value="AAH65278.1"/>
    <property type="molecule type" value="mRNA"/>
</dbReference>
<dbReference type="EMBL" id="BC131534">
    <property type="protein sequence ID" value="AAI31535.1"/>
    <property type="molecule type" value="mRNA"/>
</dbReference>
<dbReference type="EMBL" id="AF283512">
    <property type="protein sequence ID" value="AAM73547.1"/>
    <property type="status" value="ALT_INIT"/>
    <property type="molecule type" value="mRNA"/>
</dbReference>
<dbReference type="CCDS" id="CCDS1800.1">
    <molecule id="Q6P158-1"/>
</dbReference>
<dbReference type="RefSeq" id="NP_945314.1">
    <molecule id="Q6P158-1"/>
    <property type="nucleotide sequence ID" value="NM_198963.3"/>
</dbReference>
<dbReference type="RefSeq" id="XP_011531456.1">
    <molecule id="Q6P158-1"/>
    <property type="nucleotide sequence ID" value="XM_011533154.3"/>
</dbReference>
<dbReference type="RefSeq" id="XP_011531457.1">
    <molecule id="Q6P158-1"/>
    <property type="nucleotide sequence ID" value="XM_011533155.3"/>
</dbReference>
<dbReference type="RefSeq" id="XP_054200442.1">
    <molecule id="Q6P158-1"/>
    <property type="nucleotide sequence ID" value="XM_054344467.1"/>
</dbReference>
<dbReference type="RefSeq" id="XP_054200443.1">
    <molecule id="Q6P158-1"/>
    <property type="nucleotide sequence ID" value="XM_054344468.1"/>
</dbReference>
<dbReference type="SMR" id="Q6P158"/>
<dbReference type="BioGRID" id="124783">
    <property type="interactions" value="280"/>
</dbReference>
<dbReference type="FunCoup" id="Q6P158">
    <property type="interactions" value="1548"/>
</dbReference>
<dbReference type="IntAct" id="Q6P158">
    <property type="interactions" value="174"/>
</dbReference>
<dbReference type="MINT" id="Q6P158"/>
<dbReference type="STRING" id="9606.ENSP00000405111"/>
<dbReference type="CarbonylDB" id="Q6P158"/>
<dbReference type="GlyGen" id="Q6P158">
    <property type="glycosylation" value="2 sites, 1 O-linked glycan (2 sites)"/>
</dbReference>
<dbReference type="iPTMnet" id="Q6P158"/>
<dbReference type="PhosphoSitePlus" id="Q6P158"/>
<dbReference type="SwissPalm" id="Q6P158"/>
<dbReference type="BioMuta" id="DHX57"/>
<dbReference type="DMDM" id="94710252"/>
<dbReference type="jPOST" id="Q6P158"/>
<dbReference type="MassIVE" id="Q6P158"/>
<dbReference type="PaxDb" id="9606-ENSP00000405111"/>
<dbReference type="PeptideAtlas" id="Q6P158"/>
<dbReference type="ProteomicsDB" id="66819">
    <molecule id="Q6P158-1"/>
</dbReference>
<dbReference type="ProteomicsDB" id="66820">
    <molecule id="Q6P158-2"/>
</dbReference>
<dbReference type="ProteomicsDB" id="66821">
    <molecule id="Q6P158-3"/>
</dbReference>
<dbReference type="Pumba" id="Q6P158"/>
<dbReference type="Antibodypedia" id="29537">
    <property type="antibodies" value="62 antibodies from 17 providers"/>
</dbReference>
<dbReference type="DNASU" id="90957"/>
<dbReference type="Ensembl" id="ENST00000457308.6">
    <molecule id="Q6P158-1"/>
    <property type="protein sequence ID" value="ENSP00000405111.2"/>
    <property type="gene ID" value="ENSG00000163214.21"/>
</dbReference>
<dbReference type="GeneID" id="90957"/>
<dbReference type="KEGG" id="hsa:90957"/>
<dbReference type="MANE-Select" id="ENST00000457308.6">
    <property type="protein sequence ID" value="ENSP00000405111.2"/>
    <property type="RefSeq nucleotide sequence ID" value="NM_198963.3"/>
    <property type="RefSeq protein sequence ID" value="NP_945314.1"/>
</dbReference>
<dbReference type="UCSC" id="uc002rrf.5">
    <molecule id="Q6P158-1"/>
    <property type="organism name" value="human"/>
</dbReference>
<dbReference type="AGR" id="HGNC:20086"/>
<dbReference type="CTD" id="90957"/>
<dbReference type="DisGeNET" id="90957"/>
<dbReference type="GeneCards" id="DHX57"/>
<dbReference type="HGNC" id="HGNC:20086">
    <property type="gene designation" value="DHX57"/>
</dbReference>
<dbReference type="HPA" id="ENSG00000163214">
    <property type="expression patterns" value="Low tissue specificity"/>
</dbReference>
<dbReference type="neXtProt" id="NX_Q6P158"/>
<dbReference type="OpenTargets" id="ENSG00000163214"/>
<dbReference type="PharmGKB" id="PA134919698"/>
<dbReference type="VEuPathDB" id="HostDB:ENSG00000163214"/>
<dbReference type="eggNOG" id="KOG0920">
    <property type="taxonomic scope" value="Eukaryota"/>
</dbReference>
<dbReference type="GeneTree" id="ENSGT00940000156883"/>
<dbReference type="HOGENOM" id="CLU_001832_4_1_1"/>
<dbReference type="InParanoid" id="Q6P158"/>
<dbReference type="OMA" id="PERVYVQ"/>
<dbReference type="OrthoDB" id="5600252at2759"/>
<dbReference type="PAN-GO" id="Q6P158">
    <property type="GO annotations" value="2 GO annotations based on evolutionary models"/>
</dbReference>
<dbReference type="PhylomeDB" id="Q6P158"/>
<dbReference type="TreeFam" id="TF324744"/>
<dbReference type="PathwayCommons" id="Q6P158"/>
<dbReference type="SignaLink" id="Q6P158"/>
<dbReference type="BioGRID-ORCS" id="90957">
    <property type="hits" value="8 hits in 1155 CRISPR screens"/>
</dbReference>
<dbReference type="CD-CODE" id="232F8A39">
    <property type="entry name" value="P-body"/>
</dbReference>
<dbReference type="CD-CODE" id="DEE660B4">
    <property type="entry name" value="Stress granule"/>
</dbReference>
<dbReference type="ChiTaRS" id="DHX57">
    <property type="organism name" value="human"/>
</dbReference>
<dbReference type="GeneWiki" id="DHX57"/>
<dbReference type="GenomeRNAi" id="90957"/>
<dbReference type="Pharos" id="Q6P158">
    <property type="development level" value="Tdark"/>
</dbReference>
<dbReference type="PRO" id="PR:Q6P158"/>
<dbReference type="Proteomes" id="UP000005640">
    <property type="component" value="Chromosome 2"/>
</dbReference>
<dbReference type="RNAct" id="Q6P158">
    <property type="molecule type" value="protein"/>
</dbReference>
<dbReference type="Bgee" id="ENSG00000163214">
    <property type="expression patterns" value="Expressed in sperm and 175 other cell types or tissues"/>
</dbReference>
<dbReference type="ExpressionAtlas" id="Q6P158">
    <property type="expression patterns" value="baseline and differential"/>
</dbReference>
<dbReference type="GO" id="GO:0005524">
    <property type="term" value="F:ATP binding"/>
    <property type="evidence" value="ECO:0007669"/>
    <property type="project" value="UniProtKB-KW"/>
</dbReference>
<dbReference type="GO" id="GO:0016887">
    <property type="term" value="F:ATP hydrolysis activity"/>
    <property type="evidence" value="ECO:0007669"/>
    <property type="project" value="RHEA"/>
</dbReference>
<dbReference type="GO" id="GO:0004386">
    <property type="term" value="F:helicase activity"/>
    <property type="evidence" value="ECO:0000318"/>
    <property type="project" value="GO_Central"/>
</dbReference>
<dbReference type="GO" id="GO:0003723">
    <property type="term" value="F:RNA binding"/>
    <property type="evidence" value="ECO:0007005"/>
    <property type="project" value="UniProtKB"/>
</dbReference>
<dbReference type="GO" id="GO:0003724">
    <property type="term" value="F:RNA helicase activity"/>
    <property type="evidence" value="ECO:0007669"/>
    <property type="project" value="UniProtKB-EC"/>
</dbReference>
<dbReference type="GO" id="GO:0008270">
    <property type="term" value="F:zinc ion binding"/>
    <property type="evidence" value="ECO:0007669"/>
    <property type="project" value="UniProtKB-KW"/>
</dbReference>
<dbReference type="CDD" id="cd17985">
    <property type="entry name" value="DEXHc_DHX57"/>
    <property type="match status" value="1"/>
</dbReference>
<dbReference type="CDD" id="cd23825">
    <property type="entry name" value="RWD_DHX57"/>
    <property type="match status" value="1"/>
</dbReference>
<dbReference type="CDD" id="cd18791">
    <property type="entry name" value="SF2_C_RHA"/>
    <property type="match status" value="1"/>
</dbReference>
<dbReference type="CDD" id="cd14317">
    <property type="entry name" value="UBA_DHX57"/>
    <property type="match status" value="1"/>
</dbReference>
<dbReference type="FunFam" id="3.40.50.300:FF:000325">
    <property type="entry name" value="ATP-dependent RNA helicase DHX29"/>
    <property type="match status" value="1"/>
</dbReference>
<dbReference type="FunFam" id="3.40.50.300:FF:000284">
    <property type="entry name" value="probable ATP-dependent RNA helicase YTHDC2"/>
    <property type="match status" value="1"/>
</dbReference>
<dbReference type="FunFam" id="1.20.120.1080:FF:000002">
    <property type="entry name" value="Putative ATP-dependent RNA helicase DHX36"/>
    <property type="match status" value="1"/>
</dbReference>
<dbReference type="FunFam" id="4.10.1000.10:FF:000038">
    <property type="entry name" value="putative ATP-dependent RNA helicase DHX57"/>
    <property type="match status" value="1"/>
</dbReference>
<dbReference type="Gene3D" id="1.20.120.1080">
    <property type="match status" value="1"/>
</dbReference>
<dbReference type="Gene3D" id="3.40.50.300">
    <property type="entry name" value="P-loop containing nucleotide triphosphate hydrolases"/>
    <property type="match status" value="2"/>
</dbReference>
<dbReference type="Gene3D" id="4.10.1000.10">
    <property type="entry name" value="Zinc finger, CCCH-type"/>
    <property type="match status" value="1"/>
</dbReference>
<dbReference type="InterPro" id="IPR011709">
    <property type="entry name" value="DEAD-box_helicase_OB_fold"/>
</dbReference>
<dbReference type="InterPro" id="IPR011545">
    <property type="entry name" value="DEAD/DEAH_box_helicase_dom"/>
</dbReference>
<dbReference type="InterPro" id="IPR042615">
    <property type="entry name" value="DHX57_UBA"/>
</dbReference>
<dbReference type="InterPro" id="IPR002464">
    <property type="entry name" value="DNA/RNA_helicase_DEAH_CS"/>
</dbReference>
<dbReference type="InterPro" id="IPR048333">
    <property type="entry name" value="HA2_WH"/>
</dbReference>
<dbReference type="InterPro" id="IPR007502">
    <property type="entry name" value="Helicase-assoc_dom"/>
</dbReference>
<dbReference type="InterPro" id="IPR014001">
    <property type="entry name" value="Helicase_ATP-bd"/>
</dbReference>
<dbReference type="InterPro" id="IPR001650">
    <property type="entry name" value="Helicase_C-like"/>
</dbReference>
<dbReference type="InterPro" id="IPR027417">
    <property type="entry name" value="P-loop_NTPase"/>
</dbReference>
<dbReference type="InterPro" id="IPR006575">
    <property type="entry name" value="RWD_dom"/>
</dbReference>
<dbReference type="InterPro" id="IPR015940">
    <property type="entry name" value="UBA"/>
</dbReference>
<dbReference type="InterPro" id="IPR009060">
    <property type="entry name" value="UBA-like_sf"/>
</dbReference>
<dbReference type="InterPro" id="IPR041367">
    <property type="entry name" value="Znf-CCCH_4"/>
</dbReference>
<dbReference type="InterPro" id="IPR000571">
    <property type="entry name" value="Znf_CCCH"/>
</dbReference>
<dbReference type="InterPro" id="IPR036855">
    <property type="entry name" value="Znf_CCCH_sf"/>
</dbReference>
<dbReference type="PANTHER" id="PTHR18934">
    <property type="entry name" value="ATP-DEPENDENT RNA HELICASE"/>
    <property type="match status" value="1"/>
</dbReference>
<dbReference type="PANTHER" id="PTHR18934:SF145">
    <property type="entry name" value="ATP-DEPENDENT RNA HELICASE DHX57-RELATED"/>
    <property type="match status" value="1"/>
</dbReference>
<dbReference type="Pfam" id="PF00270">
    <property type="entry name" value="DEAD"/>
    <property type="match status" value="1"/>
</dbReference>
<dbReference type="Pfam" id="PF21010">
    <property type="entry name" value="HA2_C"/>
    <property type="match status" value="1"/>
</dbReference>
<dbReference type="Pfam" id="PF04408">
    <property type="entry name" value="HA2_N"/>
    <property type="match status" value="1"/>
</dbReference>
<dbReference type="Pfam" id="PF00271">
    <property type="entry name" value="Helicase_C"/>
    <property type="match status" value="1"/>
</dbReference>
<dbReference type="Pfam" id="PF07717">
    <property type="entry name" value="OB_NTP_bind"/>
    <property type="match status" value="1"/>
</dbReference>
<dbReference type="Pfam" id="PF05773">
    <property type="entry name" value="RWD"/>
    <property type="match status" value="1"/>
</dbReference>
<dbReference type="Pfam" id="PF18044">
    <property type="entry name" value="zf-CCCH_4"/>
    <property type="match status" value="1"/>
</dbReference>
<dbReference type="SMART" id="SM00487">
    <property type="entry name" value="DEXDc"/>
    <property type="match status" value="1"/>
</dbReference>
<dbReference type="SMART" id="SM00847">
    <property type="entry name" value="HA2"/>
    <property type="match status" value="1"/>
</dbReference>
<dbReference type="SMART" id="SM00490">
    <property type="entry name" value="HELICc"/>
    <property type="match status" value="1"/>
</dbReference>
<dbReference type="SMART" id="SM00356">
    <property type="entry name" value="ZnF_C3H1"/>
    <property type="match status" value="1"/>
</dbReference>
<dbReference type="SUPFAM" id="SSF90229">
    <property type="entry name" value="CCCH zinc finger"/>
    <property type="match status" value="1"/>
</dbReference>
<dbReference type="SUPFAM" id="SSF52540">
    <property type="entry name" value="P-loop containing nucleoside triphosphate hydrolases"/>
    <property type="match status" value="1"/>
</dbReference>
<dbReference type="SUPFAM" id="SSF46934">
    <property type="entry name" value="UBA-like"/>
    <property type="match status" value="1"/>
</dbReference>
<dbReference type="PROSITE" id="PS00690">
    <property type="entry name" value="DEAH_ATP_HELICASE"/>
    <property type="match status" value="1"/>
</dbReference>
<dbReference type="PROSITE" id="PS51192">
    <property type="entry name" value="HELICASE_ATP_BIND_1"/>
    <property type="match status" value="1"/>
</dbReference>
<dbReference type="PROSITE" id="PS51194">
    <property type="entry name" value="HELICASE_CTER"/>
    <property type="match status" value="1"/>
</dbReference>
<dbReference type="PROSITE" id="PS50030">
    <property type="entry name" value="UBA"/>
    <property type="match status" value="1"/>
</dbReference>
<dbReference type="PROSITE" id="PS50103">
    <property type="entry name" value="ZF_C3H1"/>
    <property type="match status" value="1"/>
</dbReference>
<evidence type="ECO:0000255" key="1"/>
<evidence type="ECO:0000255" key="2">
    <source>
        <dbReference type="PROSITE-ProRule" id="PRU00212"/>
    </source>
</evidence>
<evidence type="ECO:0000255" key="3">
    <source>
        <dbReference type="PROSITE-ProRule" id="PRU00541"/>
    </source>
</evidence>
<evidence type="ECO:0000255" key="4">
    <source>
        <dbReference type="PROSITE-ProRule" id="PRU00542"/>
    </source>
</evidence>
<evidence type="ECO:0000255" key="5">
    <source>
        <dbReference type="PROSITE-ProRule" id="PRU00723"/>
    </source>
</evidence>
<evidence type="ECO:0000256" key="6">
    <source>
        <dbReference type="SAM" id="MobiDB-lite"/>
    </source>
</evidence>
<evidence type="ECO:0000269" key="7">
    <source>
    </source>
</evidence>
<evidence type="ECO:0000269" key="8">
    <source ref="4"/>
</evidence>
<evidence type="ECO:0000303" key="9">
    <source>
    </source>
</evidence>
<evidence type="ECO:0000303" key="10">
    <source>
    </source>
</evidence>
<evidence type="ECO:0000305" key="11"/>
<evidence type="ECO:0007744" key="12">
    <source>
    </source>
</evidence>
<evidence type="ECO:0007744" key="13">
    <source>
    </source>
</evidence>
<evidence type="ECO:0007744" key="14">
    <source>
    </source>
</evidence>
<evidence type="ECO:0007744" key="15">
    <source>
    </source>
</evidence>
<evidence type="ECO:0007744" key="16">
    <source>
    </source>
</evidence>
<feature type="chain" id="PRO_0000233151" description="Putative ATP-dependent RNA helicase DHX57">
    <location>
        <begin position="1"/>
        <end position="1386"/>
    </location>
</feature>
<feature type="domain" description="UBA" evidence="2">
    <location>
        <begin position="180"/>
        <end position="220"/>
    </location>
</feature>
<feature type="domain" description="Helicase ATP-binding" evidence="3">
    <location>
        <begin position="554"/>
        <end position="721"/>
    </location>
</feature>
<feature type="domain" description="Helicase C-terminal" evidence="4">
    <location>
        <begin position="830"/>
        <end position="1010"/>
    </location>
</feature>
<feature type="zinc finger region" description="C3H1-type" evidence="5">
    <location>
        <begin position="299"/>
        <end position="326"/>
    </location>
</feature>
<feature type="region of interest" description="Disordered" evidence="6">
    <location>
        <begin position="1"/>
        <end position="106"/>
    </location>
</feature>
<feature type="region of interest" description="Disordered" evidence="6">
    <location>
        <begin position="120"/>
        <end position="147"/>
    </location>
</feature>
<feature type="coiled-coil region" evidence="1">
    <location>
        <begin position="101"/>
        <end position="125"/>
    </location>
</feature>
<feature type="short sequence motif" description="DEVH box">
    <location>
        <begin position="668"/>
        <end position="671"/>
    </location>
</feature>
<feature type="compositionally biased region" description="Basic residues" evidence="6">
    <location>
        <begin position="1"/>
        <end position="11"/>
    </location>
</feature>
<feature type="compositionally biased region" description="Gly residues" evidence="6">
    <location>
        <begin position="12"/>
        <end position="23"/>
    </location>
</feature>
<feature type="compositionally biased region" description="Gly residues" evidence="6">
    <location>
        <begin position="35"/>
        <end position="50"/>
    </location>
</feature>
<feature type="compositionally biased region" description="Acidic residues" evidence="6">
    <location>
        <begin position="133"/>
        <end position="143"/>
    </location>
</feature>
<feature type="binding site" evidence="3">
    <location>
        <begin position="567"/>
        <end position="574"/>
    </location>
    <ligand>
        <name>ATP</name>
        <dbReference type="ChEBI" id="CHEBI:30616"/>
    </ligand>
</feature>
<feature type="modified residue" description="Phosphoserine" evidence="12 14 15 16">
    <location>
        <position position="127"/>
    </location>
</feature>
<feature type="modified residue" description="Phosphoserine" evidence="16">
    <location>
        <position position="132"/>
    </location>
</feature>
<feature type="modified residue" description="Phosphoserine" evidence="13">
    <location>
        <position position="475"/>
    </location>
</feature>
<feature type="modified residue" description="Phosphoserine" evidence="13">
    <location>
        <position position="477"/>
    </location>
</feature>
<feature type="modified residue" description="Phosphoserine" evidence="12 13">
    <location>
        <position position="480"/>
    </location>
</feature>
<feature type="splice variant" id="VSP_018056" description="In isoform 3." evidence="9">
    <location>
        <begin position="1"/>
        <end position="102"/>
    </location>
</feature>
<feature type="splice variant" id="VSP_018057" description="In isoform 3." evidence="9">
    <original>ASRQFQ</original>
    <variation>VLNSHM</variation>
    <location>
        <begin position="530"/>
        <end position="535"/>
    </location>
</feature>
<feature type="splice variant" id="VSP_018058" description="In isoform 3." evidence="9">
    <location>
        <begin position="536"/>
        <end position="1386"/>
    </location>
</feature>
<feature type="splice variant" id="VSP_018059" description="In isoform 2." evidence="10">
    <original>SSATRLLYCTTGVLLRRLEGDTA</original>
    <variation>VCMLCLFPGNRNLWFLGIKSFGG</variation>
    <location>
        <begin position="636"/>
        <end position="658"/>
    </location>
</feature>
<feature type="splice variant" id="VSP_018060" description="In isoform 2." evidence="10">
    <location>
        <begin position="659"/>
        <end position="1386"/>
    </location>
</feature>
<feature type="sequence variant" id="VAR_052190" description="In dbSNP:rs11893062.">
    <original>S</original>
    <variation>F</variation>
    <location>
        <position position="410"/>
    </location>
</feature>
<feature type="sequence variant" id="VAR_033861" description="In dbSNP:rs35371077.">
    <original>S</original>
    <variation>G</variation>
    <location>
        <position position="433"/>
    </location>
</feature>
<feature type="sequence variant" id="VAR_052191" description="In dbSNP:rs7598922." evidence="7 8">
    <original>N</original>
    <variation>S</variation>
    <location>
        <position position="587"/>
    </location>
</feature>
<feature type="sequence conflict" description="In Ref. 1; BAB71479." evidence="11" ref="1">
    <original>A</original>
    <variation>T</variation>
    <location>
        <position position="474"/>
    </location>
</feature>
<feature type="sequence conflict" description="In Ref. 4; AAM73547." evidence="11" ref="4">
    <original>L</original>
    <variation>V</variation>
    <location>
        <position position="976"/>
    </location>
</feature>
<reference key="1">
    <citation type="journal article" date="2004" name="Nat. Genet.">
        <title>Complete sequencing and characterization of 21,243 full-length human cDNAs.</title>
        <authorList>
            <person name="Ota T."/>
            <person name="Suzuki Y."/>
            <person name="Nishikawa T."/>
            <person name="Otsuki T."/>
            <person name="Sugiyama T."/>
            <person name="Irie R."/>
            <person name="Wakamatsu A."/>
            <person name="Hayashi K."/>
            <person name="Sato H."/>
            <person name="Nagai K."/>
            <person name="Kimura K."/>
            <person name="Makita H."/>
            <person name="Sekine M."/>
            <person name="Obayashi M."/>
            <person name="Nishi T."/>
            <person name="Shibahara T."/>
            <person name="Tanaka T."/>
            <person name="Ishii S."/>
            <person name="Yamamoto J."/>
            <person name="Saito K."/>
            <person name="Kawai Y."/>
            <person name="Isono Y."/>
            <person name="Nakamura Y."/>
            <person name="Nagahari K."/>
            <person name="Murakami K."/>
            <person name="Yasuda T."/>
            <person name="Iwayanagi T."/>
            <person name="Wagatsuma M."/>
            <person name="Shiratori A."/>
            <person name="Sudo H."/>
            <person name="Hosoiri T."/>
            <person name="Kaku Y."/>
            <person name="Kodaira H."/>
            <person name="Kondo H."/>
            <person name="Sugawara M."/>
            <person name="Takahashi M."/>
            <person name="Kanda K."/>
            <person name="Yokoi T."/>
            <person name="Furuya T."/>
            <person name="Kikkawa E."/>
            <person name="Omura Y."/>
            <person name="Abe K."/>
            <person name="Kamihara K."/>
            <person name="Katsuta N."/>
            <person name="Sato K."/>
            <person name="Tanikawa M."/>
            <person name="Yamazaki M."/>
            <person name="Ninomiya K."/>
            <person name="Ishibashi T."/>
            <person name="Yamashita H."/>
            <person name="Murakawa K."/>
            <person name="Fujimori K."/>
            <person name="Tanai H."/>
            <person name="Kimata M."/>
            <person name="Watanabe M."/>
            <person name="Hiraoka S."/>
            <person name="Chiba Y."/>
            <person name="Ishida S."/>
            <person name="Ono Y."/>
            <person name="Takiguchi S."/>
            <person name="Watanabe S."/>
            <person name="Yosida M."/>
            <person name="Hotuta T."/>
            <person name="Kusano J."/>
            <person name="Kanehori K."/>
            <person name="Takahashi-Fujii A."/>
            <person name="Hara H."/>
            <person name="Tanase T.-O."/>
            <person name="Nomura Y."/>
            <person name="Togiya S."/>
            <person name="Komai F."/>
            <person name="Hara R."/>
            <person name="Takeuchi K."/>
            <person name="Arita M."/>
            <person name="Imose N."/>
            <person name="Musashino K."/>
            <person name="Yuuki H."/>
            <person name="Oshima A."/>
            <person name="Sasaki N."/>
            <person name="Aotsuka S."/>
            <person name="Yoshikawa Y."/>
            <person name="Matsunawa H."/>
            <person name="Ichihara T."/>
            <person name="Shiohata N."/>
            <person name="Sano S."/>
            <person name="Moriya S."/>
            <person name="Momiyama H."/>
            <person name="Satoh N."/>
            <person name="Takami S."/>
            <person name="Terashima Y."/>
            <person name="Suzuki O."/>
            <person name="Nakagawa S."/>
            <person name="Senoh A."/>
            <person name="Mizoguchi H."/>
            <person name="Goto Y."/>
            <person name="Shimizu F."/>
            <person name="Wakebe H."/>
            <person name="Hishigaki H."/>
            <person name="Watanabe T."/>
            <person name="Sugiyama A."/>
            <person name="Takemoto M."/>
            <person name="Kawakami B."/>
            <person name="Yamazaki M."/>
            <person name="Watanabe K."/>
            <person name="Kumagai A."/>
            <person name="Itakura S."/>
            <person name="Fukuzumi Y."/>
            <person name="Fujimori Y."/>
            <person name="Komiyama M."/>
            <person name="Tashiro H."/>
            <person name="Tanigami A."/>
            <person name="Fujiwara T."/>
            <person name="Ono T."/>
            <person name="Yamada K."/>
            <person name="Fujii Y."/>
            <person name="Ozaki K."/>
            <person name="Hirao M."/>
            <person name="Ohmori Y."/>
            <person name="Kawabata A."/>
            <person name="Hikiji T."/>
            <person name="Kobatake N."/>
            <person name="Inagaki H."/>
            <person name="Ikema Y."/>
            <person name="Okamoto S."/>
            <person name="Okitani R."/>
            <person name="Kawakami T."/>
            <person name="Noguchi S."/>
            <person name="Itoh T."/>
            <person name="Shigeta K."/>
            <person name="Senba T."/>
            <person name="Matsumura K."/>
            <person name="Nakajima Y."/>
            <person name="Mizuno T."/>
            <person name="Morinaga M."/>
            <person name="Sasaki M."/>
            <person name="Togashi T."/>
            <person name="Oyama M."/>
            <person name="Hata H."/>
            <person name="Watanabe M."/>
            <person name="Komatsu T."/>
            <person name="Mizushima-Sugano J."/>
            <person name="Satoh T."/>
            <person name="Shirai Y."/>
            <person name="Takahashi Y."/>
            <person name="Nakagawa K."/>
            <person name="Okumura K."/>
            <person name="Nagase T."/>
            <person name="Nomura N."/>
            <person name="Kikuchi H."/>
            <person name="Masuho Y."/>
            <person name="Yamashita R."/>
            <person name="Nakai K."/>
            <person name="Yada T."/>
            <person name="Nakamura Y."/>
            <person name="Ohara O."/>
            <person name="Isogai T."/>
            <person name="Sugano S."/>
        </authorList>
    </citation>
    <scope>NUCLEOTIDE SEQUENCE [LARGE SCALE MRNA] (ISOFORM 3)</scope>
    <source>
        <tissue>Testis</tissue>
    </source>
</reference>
<reference key="2">
    <citation type="journal article" date="2005" name="Nature">
        <title>Generation and annotation of the DNA sequences of human chromosomes 2 and 4.</title>
        <authorList>
            <person name="Hillier L.W."/>
            <person name="Graves T.A."/>
            <person name="Fulton R.S."/>
            <person name="Fulton L.A."/>
            <person name="Pepin K.H."/>
            <person name="Minx P."/>
            <person name="Wagner-McPherson C."/>
            <person name="Layman D."/>
            <person name="Wylie K."/>
            <person name="Sekhon M."/>
            <person name="Becker M.C."/>
            <person name="Fewell G.A."/>
            <person name="Delehaunty K.D."/>
            <person name="Miner T.L."/>
            <person name="Nash W.E."/>
            <person name="Kremitzki C."/>
            <person name="Oddy L."/>
            <person name="Du H."/>
            <person name="Sun H."/>
            <person name="Bradshaw-Cordum H."/>
            <person name="Ali J."/>
            <person name="Carter J."/>
            <person name="Cordes M."/>
            <person name="Harris A."/>
            <person name="Isak A."/>
            <person name="van Brunt A."/>
            <person name="Nguyen C."/>
            <person name="Du F."/>
            <person name="Courtney L."/>
            <person name="Kalicki J."/>
            <person name="Ozersky P."/>
            <person name="Abbott S."/>
            <person name="Armstrong J."/>
            <person name="Belter E.A."/>
            <person name="Caruso L."/>
            <person name="Cedroni M."/>
            <person name="Cotton M."/>
            <person name="Davidson T."/>
            <person name="Desai A."/>
            <person name="Elliott G."/>
            <person name="Erb T."/>
            <person name="Fronick C."/>
            <person name="Gaige T."/>
            <person name="Haakenson W."/>
            <person name="Haglund K."/>
            <person name="Holmes A."/>
            <person name="Harkins R."/>
            <person name="Kim K."/>
            <person name="Kruchowski S.S."/>
            <person name="Strong C.M."/>
            <person name="Grewal N."/>
            <person name="Goyea E."/>
            <person name="Hou S."/>
            <person name="Levy A."/>
            <person name="Martinka S."/>
            <person name="Mead K."/>
            <person name="McLellan M.D."/>
            <person name="Meyer R."/>
            <person name="Randall-Maher J."/>
            <person name="Tomlinson C."/>
            <person name="Dauphin-Kohlberg S."/>
            <person name="Kozlowicz-Reilly A."/>
            <person name="Shah N."/>
            <person name="Swearengen-Shahid S."/>
            <person name="Snider J."/>
            <person name="Strong J.T."/>
            <person name="Thompson J."/>
            <person name="Yoakum M."/>
            <person name="Leonard S."/>
            <person name="Pearman C."/>
            <person name="Trani L."/>
            <person name="Radionenko M."/>
            <person name="Waligorski J.E."/>
            <person name="Wang C."/>
            <person name="Rock S.M."/>
            <person name="Tin-Wollam A.-M."/>
            <person name="Maupin R."/>
            <person name="Latreille P."/>
            <person name="Wendl M.C."/>
            <person name="Yang S.-P."/>
            <person name="Pohl C."/>
            <person name="Wallis J.W."/>
            <person name="Spieth J."/>
            <person name="Bieri T.A."/>
            <person name="Berkowicz N."/>
            <person name="Nelson J.O."/>
            <person name="Osborne J."/>
            <person name="Ding L."/>
            <person name="Meyer R."/>
            <person name="Sabo A."/>
            <person name="Shotland Y."/>
            <person name="Sinha P."/>
            <person name="Wohldmann P.E."/>
            <person name="Cook L.L."/>
            <person name="Hickenbotham M.T."/>
            <person name="Eldred J."/>
            <person name="Williams D."/>
            <person name="Jones T.A."/>
            <person name="She X."/>
            <person name="Ciccarelli F.D."/>
            <person name="Izaurralde E."/>
            <person name="Taylor J."/>
            <person name="Schmutz J."/>
            <person name="Myers R.M."/>
            <person name="Cox D.R."/>
            <person name="Huang X."/>
            <person name="McPherson J.D."/>
            <person name="Mardis E.R."/>
            <person name="Clifton S.W."/>
            <person name="Warren W.C."/>
            <person name="Chinwalla A.T."/>
            <person name="Eddy S.R."/>
            <person name="Marra M.A."/>
            <person name="Ovcharenko I."/>
            <person name="Furey T.S."/>
            <person name="Miller W."/>
            <person name="Eichler E.E."/>
            <person name="Bork P."/>
            <person name="Suyama M."/>
            <person name="Torrents D."/>
            <person name="Waterston R.H."/>
            <person name="Wilson R.K."/>
        </authorList>
    </citation>
    <scope>NUCLEOTIDE SEQUENCE [LARGE SCALE GENOMIC DNA]</scope>
</reference>
<reference key="3">
    <citation type="journal article" date="2004" name="Genome Res.">
        <title>The status, quality, and expansion of the NIH full-length cDNA project: the Mammalian Gene Collection (MGC).</title>
        <authorList>
            <consortium name="The MGC Project Team"/>
        </authorList>
    </citation>
    <scope>NUCLEOTIDE SEQUENCE [LARGE SCALE MRNA] (ISOFORMS 1 AND 2)</scope>
    <scope>VARIANT SER-587</scope>
    <source>
        <tissue>Skin</tissue>
    </source>
</reference>
<reference key="4">
    <citation type="submission" date="2000-06" db="EMBL/GenBank/DDBJ databases">
        <title>Molecular cloning of a new member of DEAH-box RNA/DNA helicase gene family.</title>
        <authorList>
            <person name="Lin S."/>
            <person name="Ying K."/>
            <person name="Wang Z."/>
            <person name="Xie Y."/>
            <person name="Mao Y."/>
        </authorList>
    </citation>
    <scope>NUCLEOTIDE SEQUENCE [MRNA] OF 405-1386 (ISOFORM 1)</scope>
    <scope>VARIANT SER-587</scope>
    <source>
        <tissue>Brain</tissue>
    </source>
</reference>
<reference key="5">
    <citation type="journal article" date="2006" name="Cell">
        <title>Global, in vivo, and site-specific phosphorylation dynamics in signaling networks.</title>
        <authorList>
            <person name="Olsen J.V."/>
            <person name="Blagoev B."/>
            <person name="Gnad F."/>
            <person name="Macek B."/>
            <person name="Kumar C."/>
            <person name="Mortensen P."/>
            <person name="Mann M."/>
        </authorList>
    </citation>
    <scope>PHOSPHORYLATION [LARGE SCALE ANALYSIS] AT SER-127 AND SER-480</scope>
    <scope>IDENTIFICATION BY MASS SPECTROMETRY [LARGE SCALE ANALYSIS]</scope>
    <source>
        <tissue>Cervix carcinoma</tissue>
    </source>
</reference>
<reference key="6">
    <citation type="journal article" date="2008" name="Proc. Natl. Acad. Sci. U.S.A.">
        <title>A quantitative atlas of mitotic phosphorylation.</title>
        <authorList>
            <person name="Dephoure N."/>
            <person name="Zhou C."/>
            <person name="Villen J."/>
            <person name="Beausoleil S.A."/>
            <person name="Bakalarski C.E."/>
            <person name="Elledge S.J."/>
            <person name="Gygi S.P."/>
        </authorList>
    </citation>
    <scope>PHOSPHORYLATION [LARGE SCALE ANALYSIS] AT SER-475; SER-477 AND SER-480</scope>
    <scope>IDENTIFICATION BY MASS SPECTROMETRY [LARGE SCALE ANALYSIS]</scope>
    <source>
        <tissue>Cervix carcinoma</tissue>
    </source>
</reference>
<reference key="7">
    <citation type="journal article" date="2009" name="Anal. Chem.">
        <title>Lys-N and trypsin cover complementary parts of the phosphoproteome in a refined SCX-based approach.</title>
        <authorList>
            <person name="Gauci S."/>
            <person name="Helbig A.O."/>
            <person name="Slijper M."/>
            <person name="Krijgsveld J."/>
            <person name="Heck A.J."/>
            <person name="Mohammed S."/>
        </authorList>
    </citation>
    <scope>IDENTIFICATION BY MASS SPECTROMETRY [LARGE SCALE ANALYSIS]</scope>
</reference>
<reference key="8">
    <citation type="journal article" date="2010" name="Sci. Signal.">
        <title>Quantitative phosphoproteomics reveals widespread full phosphorylation site occupancy during mitosis.</title>
        <authorList>
            <person name="Olsen J.V."/>
            <person name="Vermeulen M."/>
            <person name="Santamaria A."/>
            <person name="Kumar C."/>
            <person name="Miller M.L."/>
            <person name="Jensen L.J."/>
            <person name="Gnad F."/>
            <person name="Cox J."/>
            <person name="Jensen T.S."/>
            <person name="Nigg E.A."/>
            <person name="Brunak S."/>
            <person name="Mann M."/>
        </authorList>
    </citation>
    <scope>PHOSPHORYLATION [LARGE SCALE ANALYSIS] AT SER-127</scope>
    <scope>IDENTIFICATION BY MASS SPECTROMETRY [LARGE SCALE ANALYSIS]</scope>
    <source>
        <tissue>Cervix carcinoma</tissue>
    </source>
</reference>
<reference key="9">
    <citation type="journal article" date="2011" name="BMC Syst. Biol.">
        <title>Initial characterization of the human central proteome.</title>
        <authorList>
            <person name="Burkard T.R."/>
            <person name="Planyavsky M."/>
            <person name="Kaupe I."/>
            <person name="Breitwieser F.P."/>
            <person name="Buerckstuemmer T."/>
            <person name="Bennett K.L."/>
            <person name="Superti-Furga G."/>
            <person name="Colinge J."/>
        </authorList>
    </citation>
    <scope>IDENTIFICATION BY MASS SPECTROMETRY [LARGE SCALE ANALYSIS]</scope>
</reference>
<reference key="10">
    <citation type="journal article" date="2011" name="Sci. Signal.">
        <title>System-wide temporal characterization of the proteome and phosphoproteome of human embryonic stem cell differentiation.</title>
        <authorList>
            <person name="Rigbolt K.T."/>
            <person name="Prokhorova T.A."/>
            <person name="Akimov V."/>
            <person name="Henningsen J."/>
            <person name="Johansen P.T."/>
            <person name="Kratchmarova I."/>
            <person name="Kassem M."/>
            <person name="Mann M."/>
            <person name="Olsen J.V."/>
            <person name="Blagoev B."/>
        </authorList>
    </citation>
    <scope>PHOSPHORYLATION [LARGE SCALE ANALYSIS] AT SER-127</scope>
    <scope>IDENTIFICATION BY MASS SPECTROMETRY [LARGE SCALE ANALYSIS]</scope>
</reference>
<reference key="11">
    <citation type="journal article" date="2013" name="J. Proteome Res.">
        <title>Toward a comprehensive characterization of a human cancer cell phosphoproteome.</title>
        <authorList>
            <person name="Zhou H."/>
            <person name="Di Palma S."/>
            <person name="Preisinger C."/>
            <person name="Peng M."/>
            <person name="Polat A.N."/>
            <person name="Heck A.J."/>
            <person name="Mohammed S."/>
        </authorList>
    </citation>
    <scope>PHOSPHORYLATION [LARGE SCALE ANALYSIS] AT SER-127 AND SER-132</scope>
    <scope>IDENTIFICATION BY MASS SPECTROMETRY [LARGE SCALE ANALYSIS]</scope>
    <source>
        <tissue>Cervix carcinoma</tissue>
    </source>
</reference>
<accession>Q6P158</accession>
<accession>A2RRC7</accession>
<accession>Q53SI4</accession>
<accession>Q6P9G1</accession>
<accession>Q7Z6H3</accession>
<accession>Q8NG17</accession>
<accession>Q96M33</accession>
<protein>
    <recommendedName>
        <fullName>Putative ATP-dependent RNA helicase DHX57</fullName>
        <ecNumber>3.6.4.13</ecNumber>
    </recommendedName>
    <alternativeName>
        <fullName>DEAH box protein 57</fullName>
    </alternativeName>
</protein>
<organism>
    <name type="scientific">Homo sapiens</name>
    <name type="common">Human</name>
    <dbReference type="NCBI Taxonomy" id="9606"/>
    <lineage>
        <taxon>Eukaryota</taxon>
        <taxon>Metazoa</taxon>
        <taxon>Chordata</taxon>
        <taxon>Craniata</taxon>
        <taxon>Vertebrata</taxon>
        <taxon>Euteleostomi</taxon>
        <taxon>Mammalia</taxon>
        <taxon>Eutheria</taxon>
        <taxon>Euarchontoglires</taxon>
        <taxon>Primates</taxon>
        <taxon>Haplorrhini</taxon>
        <taxon>Catarrhini</taxon>
        <taxon>Hominidae</taxon>
        <taxon>Homo</taxon>
    </lineage>
</organism>
<name>DHX57_HUMAN</name>
<keyword id="KW-0025">Alternative splicing</keyword>
<keyword id="KW-0067">ATP-binding</keyword>
<keyword id="KW-0175">Coiled coil</keyword>
<keyword id="KW-0347">Helicase</keyword>
<keyword id="KW-0378">Hydrolase</keyword>
<keyword id="KW-0479">Metal-binding</keyword>
<keyword id="KW-0547">Nucleotide-binding</keyword>
<keyword id="KW-0597">Phosphoprotein</keyword>
<keyword id="KW-1267">Proteomics identification</keyword>
<keyword id="KW-1185">Reference proteome</keyword>
<keyword id="KW-0862">Zinc</keyword>
<keyword id="KW-0863">Zinc-finger</keyword>
<proteinExistence type="evidence at protein level"/>
<sequence length="1386" mass="155604">MSSSVRRKGKPGKGGGKGSSRGGRGGRSHASKSHGSGGGGGGGGGGGGGNRKASSRIWDDGDDFCIFSESRRPSRPSNSNISKGESRPKWKPKAKVPLQTLHMTSENQEKVKALLRDLQEQDADAGSERGLSGEEEDDEPDCCNDERYWPAGQEPSLVPDLDPLEYAGLASVEPYVPEFTVSPFAVQKLSRYGFNTERCQAVLRMCDGDVGASLEHLLTQCFSETFGERMKISEAVNQISLDECMEQRQEEAFALKSICGEKFIERIQNRVWTIGLELEYLTSRFRKSKPKESTKNVQENSLEICKFYLKGNCKFGSKCRFKHEVPPNQIVGRIERSVDDSHLNAIEDASFLYELEIRFSKDHKYPYQAPLVAFYSTNENLPLACRLHISEFLYDKALTFAETSEPVVYSLITLLEEESEIVKLLTNTHHKYSDPPVNFLPVPSRTRINNPACHKTVIPNNSFVSNQIPEVEKASESEESDEDDGPAPVIVENESYVNLKKKISKRYDWQAKSVHAENGKICKQFRMKQASRQFQSILQERQSLPAWEERETILNLLRKHQVVVISGMTGCGKTTQIPQFILDDSLNGPPEKVANIICTQPRRISAISVAERVAKERAERVGLTVGYQIRLESVKSSATRLLYCTTGVLLRRLEGDTALQGVSHIIVDEVHERTEESDFLLLVLKDIVSQRPGLQVILMSATLNAELFSDYFNSCPVITIPGRTFPVDQFFLEDAIAVTRYVLQDGSPYMRSMKQISKEKLKARRNRTAFEEVEEDLRLSLHLQDQDSVKDAVPDQQLDFKQLLARYKGVSKSVIKTMSIMDFEKVNLELIEALLEWIVDGKHSYPPGAILVFLPGLAEIKMLYEQLQSNSLFNNRRSNRCVIHPLHSSLSSEEQQAVFVKPPAGVTKIIISTNIAETSITIDDVVYVIDSGKMKEKRYDASKGMESLEDTFVSQANALQRKGRAGRVASGVCFHLFTSHHYNHQLLKQQLPEIQRVPLEQLCLRIKILEMFSAHNLQSVFSRLIEPPHTDSLRASKIRLRDLGALTPDERLTPLGYHLASLPVDVRIGKLMLFGSIFRCLDPALTIAASLAFKSPFVSPWDKKEEANQKKLEFAFANSDYLALLQAYKGWQLSTKEGVRASYNYCRQNFLSGRVLQEMASLKRQFTELLSDIGFAREGLRAREIEKRAQGGDGVLDATGEEANSNAENPKLISAMLCAALYPNVVQVKSPEGKFQKTSTGAVRMQPKSAELKFVTKNDGYVHIHPSSVNYQVRHFDSPYLLYHEKIKTSRVFIRDCSMVSVYPLVLFGGGQVNVQLQRGEFVVSLDDGWIRFVAASHQVAELVKELRCELDQLLQDKIKNPSIDLCTCPRGSRIISTIVKLVTTQ</sequence>
<gene>
    <name type="primary">DHX57</name>
</gene>